<sequence length="552" mass="59541">MTELSIRPEEIRDALREYVDSFQATSAGREEVGRVVVTGDGIARVEGLPHTMTNELLEFSGGVLGLALNLEIGEIGTVILGEAEHIEEGQEVRRTGEILAVPVGDGFLGRVVDPLGRPIDGLGEIQAEGTRALELQAPTVVQRQPVKEPLQTGIKAIDAMTAIGRGQRQLIIGDRQTGKTTVAIDTIINQRDNWASGDPSKQVKCVYVAIGQKKSTIREVVNTLEEAGALAYTTVVAAPADEPAGFKYIAPYAGSAIAQHWMYNGQHALIVFDDLSKQAEAYRAISLLLRRPPGREAYPGDVFYLHSRLLERCAKLSDELGGGSLTGLPIIETKASDISAYIPTNVISITDGQIFLESDLFNQGVRPAINVGTSVSRVGGSAQTKAMKSVAGRLRLDLAQYRELEAFSAFGSDLDKASRDQLARGARLVELLKQPQNQPYPIERQVVSIWAGTTGKVDDVPVADVRRFESEFLDYVGRSHRGIYDAILGSGKLGDDVIQELNSAIAAFKNQFTLSDGKPLVNEAAASPLDPSAVRKESIPVHRAPARTDDEG</sequence>
<keyword id="KW-0066">ATP synthesis</keyword>
<keyword id="KW-0067">ATP-binding</keyword>
<keyword id="KW-1003">Cell membrane</keyword>
<keyword id="KW-0139">CF(1)</keyword>
<keyword id="KW-0375">Hydrogen ion transport</keyword>
<keyword id="KW-0406">Ion transport</keyword>
<keyword id="KW-0472">Membrane</keyword>
<keyword id="KW-0547">Nucleotide-binding</keyword>
<keyword id="KW-1185">Reference proteome</keyword>
<keyword id="KW-1278">Translocase</keyword>
<keyword id="KW-0813">Transport</keyword>
<proteinExistence type="inferred from homology"/>
<name>ATPA_FRAAA</name>
<reference key="1">
    <citation type="journal article" date="2007" name="Genome Res.">
        <title>Genome characteristics of facultatively symbiotic Frankia sp. strains reflect host range and host plant biogeography.</title>
        <authorList>
            <person name="Normand P."/>
            <person name="Lapierre P."/>
            <person name="Tisa L.S."/>
            <person name="Gogarten J.P."/>
            <person name="Alloisio N."/>
            <person name="Bagnarol E."/>
            <person name="Bassi C.A."/>
            <person name="Berry A.M."/>
            <person name="Bickhart D.M."/>
            <person name="Choisne N."/>
            <person name="Couloux A."/>
            <person name="Cournoyer B."/>
            <person name="Cruveiller S."/>
            <person name="Daubin V."/>
            <person name="Demange N."/>
            <person name="Francino M.P."/>
            <person name="Goltsman E."/>
            <person name="Huang Y."/>
            <person name="Kopp O.R."/>
            <person name="Labarre L."/>
            <person name="Lapidus A."/>
            <person name="Lavire C."/>
            <person name="Marechal J."/>
            <person name="Martinez M."/>
            <person name="Mastronunzio J.E."/>
            <person name="Mullin B.C."/>
            <person name="Niemann J."/>
            <person name="Pujic P."/>
            <person name="Rawnsley T."/>
            <person name="Rouy Z."/>
            <person name="Schenowitz C."/>
            <person name="Sellstedt A."/>
            <person name="Tavares F."/>
            <person name="Tomkins J.P."/>
            <person name="Vallenet D."/>
            <person name="Valverde C."/>
            <person name="Wall L.G."/>
            <person name="Wang Y."/>
            <person name="Medigue C."/>
            <person name="Benson D.R."/>
        </authorList>
    </citation>
    <scope>NUCLEOTIDE SEQUENCE [LARGE SCALE GENOMIC DNA]</scope>
    <source>
        <strain>DSM 45986 / CECT 9034 / ACN14a</strain>
    </source>
</reference>
<gene>
    <name evidence="1" type="primary">atpA</name>
    <name type="ordered locus">FRAAL5933</name>
</gene>
<feature type="chain" id="PRO_0000302650" description="ATP synthase subunit alpha">
    <location>
        <begin position="1"/>
        <end position="552"/>
    </location>
</feature>
<feature type="region of interest" description="Disordered" evidence="2">
    <location>
        <begin position="526"/>
        <end position="552"/>
    </location>
</feature>
<feature type="compositionally biased region" description="Basic and acidic residues" evidence="2">
    <location>
        <begin position="533"/>
        <end position="552"/>
    </location>
</feature>
<feature type="binding site" evidence="1">
    <location>
        <begin position="173"/>
        <end position="180"/>
    </location>
    <ligand>
        <name>ATP</name>
        <dbReference type="ChEBI" id="CHEBI:30616"/>
    </ligand>
</feature>
<feature type="site" description="Required for activity" evidence="1">
    <location>
        <position position="374"/>
    </location>
</feature>
<evidence type="ECO:0000255" key="1">
    <source>
        <dbReference type="HAMAP-Rule" id="MF_01346"/>
    </source>
</evidence>
<evidence type="ECO:0000256" key="2">
    <source>
        <dbReference type="SAM" id="MobiDB-lite"/>
    </source>
</evidence>
<protein>
    <recommendedName>
        <fullName evidence="1">ATP synthase subunit alpha</fullName>
        <ecNumber evidence="1">7.1.2.2</ecNumber>
    </recommendedName>
    <alternativeName>
        <fullName evidence="1">ATP synthase F1 sector subunit alpha</fullName>
    </alternativeName>
    <alternativeName>
        <fullName evidence="1">F-ATPase subunit alpha</fullName>
    </alternativeName>
</protein>
<accession>Q0RDB2</accession>
<organism>
    <name type="scientific">Frankia alni (strain DSM 45986 / CECT 9034 / ACN14a)</name>
    <dbReference type="NCBI Taxonomy" id="326424"/>
    <lineage>
        <taxon>Bacteria</taxon>
        <taxon>Bacillati</taxon>
        <taxon>Actinomycetota</taxon>
        <taxon>Actinomycetes</taxon>
        <taxon>Frankiales</taxon>
        <taxon>Frankiaceae</taxon>
        <taxon>Frankia</taxon>
    </lineage>
</organism>
<dbReference type="EC" id="7.1.2.2" evidence="1"/>
<dbReference type="EMBL" id="CT573213">
    <property type="protein sequence ID" value="CAJ64558.1"/>
    <property type="molecule type" value="Genomic_DNA"/>
</dbReference>
<dbReference type="RefSeq" id="WP_011606993.1">
    <property type="nucleotide sequence ID" value="NC_008278.1"/>
</dbReference>
<dbReference type="SMR" id="Q0RDB2"/>
<dbReference type="STRING" id="326424.FRAAL5933"/>
<dbReference type="KEGG" id="fal:FRAAL5933"/>
<dbReference type="eggNOG" id="COG0056">
    <property type="taxonomic scope" value="Bacteria"/>
</dbReference>
<dbReference type="HOGENOM" id="CLU_010091_2_1_11"/>
<dbReference type="OrthoDB" id="9803053at2"/>
<dbReference type="Proteomes" id="UP000000657">
    <property type="component" value="Chromosome"/>
</dbReference>
<dbReference type="GO" id="GO:0005886">
    <property type="term" value="C:plasma membrane"/>
    <property type="evidence" value="ECO:0007669"/>
    <property type="project" value="UniProtKB-SubCell"/>
</dbReference>
<dbReference type="GO" id="GO:0045259">
    <property type="term" value="C:proton-transporting ATP synthase complex"/>
    <property type="evidence" value="ECO:0007669"/>
    <property type="project" value="UniProtKB-KW"/>
</dbReference>
<dbReference type="GO" id="GO:0043531">
    <property type="term" value="F:ADP binding"/>
    <property type="evidence" value="ECO:0007669"/>
    <property type="project" value="TreeGrafter"/>
</dbReference>
<dbReference type="GO" id="GO:0005524">
    <property type="term" value="F:ATP binding"/>
    <property type="evidence" value="ECO:0007669"/>
    <property type="project" value="UniProtKB-UniRule"/>
</dbReference>
<dbReference type="GO" id="GO:0046933">
    <property type="term" value="F:proton-transporting ATP synthase activity, rotational mechanism"/>
    <property type="evidence" value="ECO:0007669"/>
    <property type="project" value="UniProtKB-UniRule"/>
</dbReference>
<dbReference type="CDD" id="cd18113">
    <property type="entry name" value="ATP-synt_F1_alpha_C"/>
    <property type="match status" value="1"/>
</dbReference>
<dbReference type="CDD" id="cd18116">
    <property type="entry name" value="ATP-synt_F1_alpha_N"/>
    <property type="match status" value="1"/>
</dbReference>
<dbReference type="CDD" id="cd01132">
    <property type="entry name" value="F1-ATPase_alpha_CD"/>
    <property type="match status" value="1"/>
</dbReference>
<dbReference type="FunFam" id="1.20.150.20:FF:000001">
    <property type="entry name" value="ATP synthase subunit alpha"/>
    <property type="match status" value="1"/>
</dbReference>
<dbReference type="FunFam" id="3.40.50.300:FF:000002">
    <property type="entry name" value="ATP synthase subunit alpha"/>
    <property type="match status" value="1"/>
</dbReference>
<dbReference type="Gene3D" id="2.40.30.20">
    <property type="match status" value="1"/>
</dbReference>
<dbReference type="Gene3D" id="1.20.150.20">
    <property type="entry name" value="ATP synthase alpha/beta chain, C-terminal domain"/>
    <property type="match status" value="1"/>
</dbReference>
<dbReference type="Gene3D" id="3.40.50.300">
    <property type="entry name" value="P-loop containing nucleotide triphosphate hydrolases"/>
    <property type="match status" value="1"/>
</dbReference>
<dbReference type="HAMAP" id="MF_01346">
    <property type="entry name" value="ATP_synth_alpha_bact"/>
    <property type="match status" value="1"/>
</dbReference>
<dbReference type="InterPro" id="IPR023366">
    <property type="entry name" value="ATP_synth_asu-like_sf"/>
</dbReference>
<dbReference type="InterPro" id="IPR000793">
    <property type="entry name" value="ATP_synth_asu_C"/>
</dbReference>
<dbReference type="InterPro" id="IPR038376">
    <property type="entry name" value="ATP_synth_asu_C_sf"/>
</dbReference>
<dbReference type="InterPro" id="IPR033732">
    <property type="entry name" value="ATP_synth_F1_a_nt-bd_dom"/>
</dbReference>
<dbReference type="InterPro" id="IPR005294">
    <property type="entry name" value="ATP_synth_F1_asu"/>
</dbReference>
<dbReference type="InterPro" id="IPR020003">
    <property type="entry name" value="ATPase_a/bsu_AS"/>
</dbReference>
<dbReference type="InterPro" id="IPR004100">
    <property type="entry name" value="ATPase_F1/V1/A1_a/bsu_N"/>
</dbReference>
<dbReference type="InterPro" id="IPR036121">
    <property type="entry name" value="ATPase_F1/V1/A1_a/bsu_N_sf"/>
</dbReference>
<dbReference type="InterPro" id="IPR000194">
    <property type="entry name" value="ATPase_F1/V1/A1_a/bsu_nucl-bd"/>
</dbReference>
<dbReference type="InterPro" id="IPR027417">
    <property type="entry name" value="P-loop_NTPase"/>
</dbReference>
<dbReference type="NCBIfam" id="TIGR00962">
    <property type="entry name" value="atpA"/>
    <property type="match status" value="1"/>
</dbReference>
<dbReference type="NCBIfam" id="NF009884">
    <property type="entry name" value="PRK13343.1"/>
    <property type="match status" value="1"/>
</dbReference>
<dbReference type="PANTHER" id="PTHR48082">
    <property type="entry name" value="ATP SYNTHASE SUBUNIT ALPHA, MITOCHONDRIAL"/>
    <property type="match status" value="1"/>
</dbReference>
<dbReference type="PANTHER" id="PTHR48082:SF2">
    <property type="entry name" value="ATP SYNTHASE SUBUNIT ALPHA, MITOCHONDRIAL"/>
    <property type="match status" value="1"/>
</dbReference>
<dbReference type="Pfam" id="PF00006">
    <property type="entry name" value="ATP-synt_ab"/>
    <property type="match status" value="1"/>
</dbReference>
<dbReference type="Pfam" id="PF00306">
    <property type="entry name" value="ATP-synt_ab_C"/>
    <property type="match status" value="1"/>
</dbReference>
<dbReference type="Pfam" id="PF02874">
    <property type="entry name" value="ATP-synt_ab_N"/>
    <property type="match status" value="1"/>
</dbReference>
<dbReference type="SUPFAM" id="SSF47917">
    <property type="entry name" value="C-terminal domain of alpha and beta subunits of F1 ATP synthase"/>
    <property type="match status" value="1"/>
</dbReference>
<dbReference type="SUPFAM" id="SSF50615">
    <property type="entry name" value="N-terminal domain of alpha and beta subunits of F1 ATP synthase"/>
    <property type="match status" value="1"/>
</dbReference>
<dbReference type="SUPFAM" id="SSF52540">
    <property type="entry name" value="P-loop containing nucleoside triphosphate hydrolases"/>
    <property type="match status" value="1"/>
</dbReference>
<dbReference type="PROSITE" id="PS00152">
    <property type="entry name" value="ATPASE_ALPHA_BETA"/>
    <property type="match status" value="1"/>
</dbReference>
<comment type="function">
    <text evidence="1">Produces ATP from ADP in the presence of a proton gradient across the membrane. The alpha chain is a regulatory subunit.</text>
</comment>
<comment type="catalytic activity">
    <reaction evidence="1">
        <text>ATP + H2O + 4 H(+)(in) = ADP + phosphate + 5 H(+)(out)</text>
        <dbReference type="Rhea" id="RHEA:57720"/>
        <dbReference type="ChEBI" id="CHEBI:15377"/>
        <dbReference type="ChEBI" id="CHEBI:15378"/>
        <dbReference type="ChEBI" id="CHEBI:30616"/>
        <dbReference type="ChEBI" id="CHEBI:43474"/>
        <dbReference type="ChEBI" id="CHEBI:456216"/>
        <dbReference type="EC" id="7.1.2.2"/>
    </reaction>
</comment>
<comment type="subunit">
    <text evidence="1">F-type ATPases have 2 components, CF(1) - the catalytic core - and CF(0) - the membrane proton channel. CF(1) has five subunits: alpha(3), beta(3), gamma(1), delta(1), epsilon(1). CF(0) has three main subunits: a(1), b(2) and c(9-12). The alpha and beta chains form an alternating ring which encloses part of the gamma chain. CF(1) is attached to CF(0) by a central stalk formed by the gamma and epsilon chains, while a peripheral stalk is formed by the delta and b chains.</text>
</comment>
<comment type="subcellular location">
    <subcellularLocation>
        <location evidence="1">Cell membrane</location>
        <topology evidence="1">Peripheral membrane protein</topology>
    </subcellularLocation>
</comment>
<comment type="similarity">
    <text evidence="1">Belongs to the ATPase alpha/beta chains family.</text>
</comment>